<evidence type="ECO:0000255" key="1">
    <source>
        <dbReference type="HAMAP-Rule" id="MF_00482"/>
    </source>
</evidence>
<gene>
    <name evidence="1" type="primary">psaB</name>
</gene>
<reference key="1">
    <citation type="submission" date="2007-03" db="EMBL/GenBank/DDBJ databases">
        <title>Sequencing analysis of Aethionema coridifolium chloroplast DNA.</title>
        <authorList>
            <person name="Hosouchi T."/>
            <person name="Tsuruoka H."/>
            <person name="Kotani H."/>
        </authorList>
    </citation>
    <scope>NUCLEOTIDE SEQUENCE [LARGE SCALE GENOMIC DNA]</scope>
</reference>
<feature type="chain" id="PRO_0000300031" description="Photosystem I P700 chlorophyll a apoprotein A2">
    <location>
        <begin position="1"/>
        <end position="734"/>
    </location>
</feature>
<feature type="transmembrane region" description="Helical; Name=I" evidence="1">
    <location>
        <begin position="46"/>
        <end position="69"/>
    </location>
</feature>
<feature type="transmembrane region" description="Helical; Name=II" evidence="1">
    <location>
        <begin position="135"/>
        <end position="158"/>
    </location>
</feature>
<feature type="transmembrane region" description="Helical; Name=III" evidence="1">
    <location>
        <begin position="175"/>
        <end position="199"/>
    </location>
</feature>
<feature type="transmembrane region" description="Helical; Name=IV" evidence="1">
    <location>
        <begin position="273"/>
        <end position="291"/>
    </location>
</feature>
<feature type="transmembrane region" description="Helical; Name=V" evidence="1">
    <location>
        <begin position="330"/>
        <end position="353"/>
    </location>
</feature>
<feature type="transmembrane region" description="Helical; Name=VI" evidence="1">
    <location>
        <begin position="369"/>
        <end position="395"/>
    </location>
</feature>
<feature type="transmembrane region" description="Helical; Name=VII" evidence="1">
    <location>
        <begin position="417"/>
        <end position="439"/>
    </location>
</feature>
<feature type="transmembrane region" description="Helical; Name=VIII" evidence="1">
    <location>
        <begin position="517"/>
        <end position="535"/>
    </location>
</feature>
<feature type="transmembrane region" description="Helical; Name=IX" evidence="1">
    <location>
        <begin position="575"/>
        <end position="596"/>
    </location>
</feature>
<feature type="transmembrane region" description="Helical; Name=X" evidence="1">
    <location>
        <begin position="643"/>
        <end position="665"/>
    </location>
</feature>
<feature type="transmembrane region" description="Helical; Name=XI" evidence="1">
    <location>
        <begin position="707"/>
        <end position="727"/>
    </location>
</feature>
<feature type="binding site" evidence="1">
    <location>
        <position position="559"/>
    </location>
    <ligand>
        <name>[4Fe-4S] cluster</name>
        <dbReference type="ChEBI" id="CHEBI:49883"/>
        <note>ligand shared between dimeric partners</note>
    </ligand>
</feature>
<feature type="binding site" evidence="1">
    <location>
        <position position="568"/>
    </location>
    <ligand>
        <name>[4Fe-4S] cluster</name>
        <dbReference type="ChEBI" id="CHEBI:49883"/>
        <note>ligand shared between dimeric partners</note>
    </ligand>
</feature>
<feature type="binding site" description="axial binding residue" evidence="1">
    <location>
        <position position="654"/>
    </location>
    <ligand>
        <name>chlorophyll a</name>
        <dbReference type="ChEBI" id="CHEBI:58416"/>
        <label>B1</label>
    </ligand>
    <ligandPart>
        <name>Mg</name>
        <dbReference type="ChEBI" id="CHEBI:25107"/>
    </ligandPart>
</feature>
<feature type="binding site" description="axial binding residue" evidence="1">
    <location>
        <position position="662"/>
    </location>
    <ligand>
        <name>chlorophyll a</name>
        <dbReference type="ChEBI" id="CHEBI:58416"/>
        <label>B3</label>
    </ligand>
    <ligandPart>
        <name>Mg</name>
        <dbReference type="ChEBI" id="CHEBI:25107"/>
    </ligandPart>
</feature>
<feature type="binding site" evidence="1">
    <location>
        <position position="670"/>
    </location>
    <ligand>
        <name>chlorophyll a</name>
        <dbReference type="ChEBI" id="CHEBI:58416"/>
        <label>B3</label>
    </ligand>
</feature>
<feature type="binding site" evidence="1">
    <location>
        <position position="671"/>
    </location>
    <ligand>
        <name>phylloquinone</name>
        <dbReference type="ChEBI" id="CHEBI:18067"/>
        <label>B</label>
    </ligand>
</feature>
<sequence>MALRFPRFSQGLAQDPTTRRIWFGIATAHDFESHDDITEERLYQNIFASHFGQLAIIFLWTSGNLFHVAWQGNFETWVQDPLHVRPIAHAIWDPHFGQPAVEAFTRGGALGPVNIAYSGVYQWWYTIGLRTNEDLYTGALFLLFLSAISLIGGWLHLQPKWKPRVSWFKNAESRLNHHLSGLFGVSSLAWTGHLVHVAIPASRGEYVRWNNLLNVLPHPQGLGPLFTGQWNLYAQNPDSSSHLFGTSQGSGTAILTLLGGFHPQTQSLWLTDIAHHHLAIAILFLIAGHMYRTNFGIGHSIKDLLEAHIPPGGRLGRGHKGLYDTINNSIHFQLGLALASLGVITSLVAQHMYSLPAYAFIAQDFTTQAALYTHHQYIAGFIMTGAFAHGAIFFIRDYNPEQNEDNVLARMLDHKEAIISHLSWASLFLGFHTLGLYVHNDVMLAFGTPEKQILIEPIFAQWIQSAHGKTSYGFDVLLSSTNGPAFNAGRSIWLPGWLNAINENSNSLFLTIGPGDFLVHHAIALGLHTTTLILVKGALDARGSKLMPDKKDFGYSFPCDGPGRGGTCDISAWDAFYLAVFWMLNTIGWVTFYWHWKHITLWQGNVSQFNESSTYLMGWLRDYLWLNSSQLINGYNPFGMNSLSVWAWMFLFGHLVWATGFMFLISWRGYWQELIETLAWAHERTPLANLIRWKDKPVALSIVQARLVGLAHFSVGYIFTYAAFLIASTSGKFG</sequence>
<proteinExistence type="inferred from homology"/>
<geneLocation type="chloroplast"/>
<name>PSAB_AETCO</name>
<protein>
    <recommendedName>
        <fullName evidence="1">Photosystem I P700 chlorophyll a apoprotein A2</fullName>
        <ecNumber evidence="1">1.97.1.12</ecNumber>
    </recommendedName>
    <alternativeName>
        <fullName evidence="1">PSI-B</fullName>
    </alternativeName>
    <alternativeName>
        <fullName evidence="1">PsaB</fullName>
    </alternativeName>
</protein>
<dbReference type="EC" id="1.97.1.12" evidence="1"/>
<dbReference type="EMBL" id="AP009366">
    <property type="protein sequence ID" value="BAF49769.1"/>
    <property type="molecule type" value="Genomic_DNA"/>
</dbReference>
<dbReference type="RefSeq" id="YP_001122945.1">
    <property type="nucleotide sequence ID" value="NC_009265.1"/>
</dbReference>
<dbReference type="SMR" id="A4QJB4"/>
<dbReference type="GeneID" id="4968593"/>
<dbReference type="GO" id="GO:0009535">
    <property type="term" value="C:chloroplast thylakoid membrane"/>
    <property type="evidence" value="ECO:0007669"/>
    <property type="project" value="UniProtKB-SubCell"/>
</dbReference>
<dbReference type="GO" id="GO:0009522">
    <property type="term" value="C:photosystem I"/>
    <property type="evidence" value="ECO:0007669"/>
    <property type="project" value="UniProtKB-KW"/>
</dbReference>
<dbReference type="GO" id="GO:0051539">
    <property type="term" value="F:4 iron, 4 sulfur cluster binding"/>
    <property type="evidence" value="ECO:0007669"/>
    <property type="project" value="UniProtKB-KW"/>
</dbReference>
<dbReference type="GO" id="GO:0016168">
    <property type="term" value="F:chlorophyll binding"/>
    <property type="evidence" value="ECO:0007669"/>
    <property type="project" value="UniProtKB-KW"/>
</dbReference>
<dbReference type="GO" id="GO:0009055">
    <property type="term" value="F:electron transfer activity"/>
    <property type="evidence" value="ECO:0007669"/>
    <property type="project" value="UniProtKB-UniRule"/>
</dbReference>
<dbReference type="GO" id="GO:0000287">
    <property type="term" value="F:magnesium ion binding"/>
    <property type="evidence" value="ECO:0007669"/>
    <property type="project" value="UniProtKB-UniRule"/>
</dbReference>
<dbReference type="GO" id="GO:0016491">
    <property type="term" value="F:oxidoreductase activity"/>
    <property type="evidence" value="ECO:0007669"/>
    <property type="project" value="UniProtKB-KW"/>
</dbReference>
<dbReference type="GO" id="GO:0015979">
    <property type="term" value="P:photosynthesis"/>
    <property type="evidence" value="ECO:0007669"/>
    <property type="project" value="UniProtKB-UniRule"/>
</dbReference>
<dbReference type="FunFam" id="1.20.1130.10:FF:000001">
    <property type="entry name" value="Photosystem I P700 chlorophyll a apoprotein A2"/>
    <property type="match status" value="1"/>
</dbReference>
<dbReference type="Gene3D" id="1.20.1130.10">
    <property type="entry name" value="Photosystem I PsaA/PsaB"/>
    <property type="match status" value="1"/>
</dbReference>
<dbReference type="HAMAP" id="MF_00482">
    <property type="entry name" value="PSI_PsaB"/>
    <property type="match status" value="1"/>
</dbReference>
<dbReference type="InterPro" id="IPR001280">
    <property type="entry name" value="PSI_PsaA/B"/>
</dbReference>
<dbReference type="InterPro" id="IPR020586">
    <property type="entry name" value="PSI_PsaA/B_CS"/>
</dbReference>
<dbReference type="InterPro" id="IPR036408">
    <property type="entry name" value="PSI_PsaA/B_sf"/>
</dbReference>
<dbReference type="InterPro" id="IPR006244">
    <property type="entry name" value="PSI_PsaB"/>
</dbReference>
<dbReference type="NCBIfam" id="TIGR01336">
    <property type="entry name" value="psaB"/>
    <property type="match status" value="1"/>
</dbReference>
<dbReference type="PANTHER" id="PTHR30128">
    <property type="entry name" value="OUTER MEMBRANE PROTEIN, OMPA-RELATED"/>
    <property type="match status" value="1"/>
</dbReference>
<dbReference type="PANTHER" id="PTHR30128:SF19">
    <property type="entry name" value="PHOTOSYSTEM I P700 CHLOROPHYLL A APOPROTEIN A1-RELATED"/>
    <property type="match status" value="1"/>
</dbReference>
<dbReference type="Pfam" id="PF00223">
    <property type="entry name" value="PsaA_PsaB"/>
    <property type="match status" value="1"/>
</dbReference>
<dbReference type="PIRSF" id="PIRSF002905">
    <property type="entry name" value="PSI_A"/>
    <property type="match status" value="1"/>
</dbReference>
<dbReference type="PRINTS" id="PR00257">
    <property type="entry name" value="PHOTSYSPSAAB"/>
</dbReference>
<dbReference type="SUPFAM" id="SSF81558">
    <property type="entry name" value="Photosystem I subunits PsaA/PsaB"/>
    <property type="match status" value="1"/>
</dbReference>
<dbReference type="PROSITE" id="PS00419">
    <property type="entry name" value="PHOTOSYSTEM_I_PSAAB"/>
    <property type="match status" value="1"/>
</dbReference>
<accession>A4QJB4</accession>
<organism>
    <name type="scientific">Aethionema cordifolium</name>
    <name type="common">Lebanon stonecress</name>
    <dbReference type="NCBI Taxonomy" id="434059"/>
    <lineage>
        <taxon>Eukaryota</taxon>
        <taxon>Viridiplantae</taxon>
        <taxon>Streptophyta</taxon>
        <taxon>Embryophyta</taxon>
        <taxon>Tracheophyta</taxon>
        <taxon>Spermatophyta</taxon>
        <taxon>Magnoliopsida</taxon>
        <taxon>eudicotyledons</taxon>
        <taxon>Gunneridae</taxon>
        <taxon>Pentapetalae</taxon>
        <taxon>rosids</taxon>
        <taxon>malvids</taxon>
        <taxon>Brassicales</taxon>
        <taxon>Brassicaceae</taxon>
        <taxon>Aethionemeae</taxon>
        <taxon>Aethionema</taxon>
    </lineage>
</organism>
<comment type="function">
    <text evidence="1">PsaA and PsaB bind P700, the primary electron donor of photosystem I (PSI), as well as the electron acceptors A0, A1 and FX. PSI is a plastocyanin-ferredoxin oxidoreductase, converting photonic excitation into a charge separation, which transfers an electron from the donor P700 chlorophyll pair to the spectroscopically characterized acceptors A0, A1, FX, FA and FB in turn. Oxidized P700 is reduced on the lumenal side of the thylakoid membrane by plastocyanin.</text>
</comment>
<comment type="catalytic activity">
    <reaction evidence="1">
        <text>reduced [plastocyanin] + hnu + oxidized [2Fe-2S]-[ferredoxin] = oxidized [plastocyanin] + reduced [2Fe-2S]-[ferredoxin]</text>
        <dbReference type="Rhea" id="RHEA:30407"/>
        <dbReference type="Rhea" id="RHEA-COMP:10000"/>
        <dbReference type="Rhea" id="RHEA-COMP:10001"/>
        <dbReference type="Rhea" id="RHEA-COMP:10039"/>
        <dbReference type="Rhea" id="RHEA-COMP:10040"/>
        <dbReference type="ChEBI" id="CHEBI:29036"/>
        <dbReference type="ChEBI" id="CHEBI:30212"/>
        <dbReference type="ChEBI" id="CHEBI:33737"/>
        <dbReference type="ChEBI" id="CHEBI:33738"/>
        <dbReference type="ChEBI" id="CHEBI:49552"/>
        <dbReference type="EC" id="1.97.1.12"/>
    </reaction>
</comment>
<comment type="cofactor">
    <text evidence="1">P700 is a chlorophyll a/chlorophyll a' dimer, A0 is one or more chlorophyll a, A1 is one or both phylloquinones and FX is a shared 4Fe-4S iron-sulfur center.</text>
</comment>
<comment type="subunit">
    <text evidence="1">The PsaA/B heterodimer binds the P700 chlorophyll special pair and subsequent electron acceptors. PSI consists of a core antenna complex that captures photons, and an electron transfer chain that converts photonic excitation into a charge separation. The eukaryotic PSI reaction center is composed of at least 11 subunits.</text>
</comment>
<comment type="subcellular location">
    <subcellularLocation>
        <location evidence="1">Plastid</location>
        <location evidence="1">Chloroplast thylakoid membrane</location>
        <topology evidence="1">Multi-pass membrane protein</topology>
    </subcellularLocation>
</comment>
<comment type="similarity">
    <text evidence="1">Belongs to the PsaA/PsaB family.</text>
</comment>
<keyword id="KW-0004">4Fe-4S</keyword>
<keyword id="KW-0148">Chlorophyll</keyword>
<keyword id="KW-0150">Chloroplast</keyword>
<keyword id="KW-0157">Chromophore</keyword>
<keyword id="KW-0249">Electron transport</keyword>
<keyword id="KW-0408">Iron</keyword>
<keyword id="KW-0411">Iron-sulfur</keyword>
<keyword id="KW-0460">Magnesium</keyword>
<keyword id="KW-0472">Membrane</keyword>
<keyword id="KW-0479">Metal-binding</keyword>
<keyword id="KW-0560">Oxidoreductase</keyword>
<keyword id="KW-0602">Photosynthesis</keyword>
<keyword id="KW-0603">Photosystem I</keyword>
<keyword id="KW-0934">Plastid</keyword>
<keyword id="KW-0793">Thylakoid</keyword>
<keyword id="KW-0812">Transmembrane</keyword>
<keyword id="KW-1133">Transmembrane helix</keyword>
<keyword id="KW-0813">Transport</keyword>